<reference key="1">
    <citation type="journal article" date="2015" name="Genome Announc.">
        <title>Genome sequence of the AIDS-associated pathogen Penicillium marneffei (ATCC18224) and its near taxonomic relative Talaromyces stipitatus (ATCC10500).</title>
        <authorList>
            <person name="Nierman W.C."/>
            <person name="Fedorova-Abrams N.D."/>
            <person name="Andrianopoulos A."/>
        </authorList>
    </citation>
    <scope>NUCLEOTIDE SEQUENCE [LARGE SCALE GENOMIC DNA]</scope>
    <source>
        <strain>ATCC 18224 / CBS 334.59 / QM 7333</strain>
    </source>
</reference>
<reference key="2">
    <citation type="journal article" date="2010" name="J. Biol. Chem.">
        <title>A new group of aromatic prenyltransferases in fungi, catalyzing a 2,7-dihydroxynaphthalene 3-dimethylallyl-transferase reaction.</title>
        <authorList>
            <person name="Haug-Schifferdecker E."/>
            <person name="Arican D."/>
            <person name="Brueckner R."/>
            <person name="Heide L."/>
        </authorList>
    </citation>
    <scope>FUNCTION</scope>
</reference>
<proteinExistence type="inferred from homology"/>
<dbReference type="EC" id="2.5.1.-" evidence="6"/>
<dbReference type="EMBL" id="DS995899">
    <property type="protein sequence ID" value="EEA27349.1"/>
    <property type="molecule type" value="Genomic_DNA"/>
</dbReference>
<dbReference type="RefSeq" id="XP_002143864.1">
    <property type="nucleotide sequence ID" value="XM_002143828.1"/>
</dbReference>
<dbReference type="SMR" id="B6Q506"/>
<dbReference type="GlyCosmos" id="B6Q506">
    <property type="glycosylation" value="2 sites, No reported glycans"/>
</dbReference>
<dbReference type="VEuPathDB" id="FungiDB:PMAA_022320"/>
<dbReference type="HOGENOM" id="CLU_057184_0_0_1"/>
<dbReference type="OrthoDB" id="6950at28568"/>
<dbReference type="PhylomeDB" id="B6Q506"/>
<dbReference type="Proteomes" id="UP000001294">
    <property type="component" value="Unassembled WGS sequence"/>
</dbReference>
<dbReference type="GO" id="GO:0004659">
    <property type="term" value="F:prenyltransferase activity"/>
    <property type="evidence" value="ECO:0007669"/>
    <property type="project" value="UniProtKB-KW"/>
</dbReference>
<dbReference type="CDD" id="cd13931">
    <property type="entry name" value="PT-CloQ_NphB"/>
    <property type="match status" value="1"/>
</dbReference>
<dbReference type="InterPro" id="IPR033964">
    <property type="entry name" value="Aro_prenylTrfase"/>
</dbReference>
<dbReference type="InterPro" id="IPR020965">
    <property type="entry name" value="Prenyltransferase_CloQ"/>
</dbReference>
<dbReference type="InterPro" id="IPR036239">
    <property type="entry name" value="PrenylTrfase-like_sf"/>
</dbReference>
<dbReference type="Pfam" id="PF11468">
    <property type="entry name" value="PTase_Orf2"/>
    <property type="match status" value="1"/>
</dbReference>
<dbReference type="SFLD" id="SFLDS00036">
    <property type="entry name" value="Aromatic_Prenyltransferase"/>
    <property type="match status" value="1"/>
</dbReference>
<dbReference type="SFLD" id="SFLDG01163">
    <property type="entry name" value="II"/>
    <property type="match status" value="1"/>
</dbReference>
<dbReference type="SUPFAM" id="SSF143492">
    <property type="entry name" value="Prenyltransferase-like"/>
    <property type="match status" value="1"/>
</dbReference>
<feature type="signal peptide" evidence="1">
    <location>
        <begin position="1"/>
        <end position="22"/>
    </location>
</feature>
<feature type="chain" id="PRO_5002847864" description="Aromatic prenyltransferase">
    <location>
        <begin position="23"/>
        <end position="364"/>
    </location>
</feature>
<feature type="glycosylation site" description="N-linked (GlcNAc...) asparagine" evidence="2">
    <location>
        <position position="142"/>
    </location>
</feature>
<feature type="glycosylation site" description="N-linked (GlcNAc...) asparagine" evidence="2">
    <location>
        <position position="337"/>
    </location>
</feature>
<sequence>MDRNQWTLALMALMRFAHRAFINPVSPLPKFSRLAFTQGASRLYATLHVDAGLQDNVVDKAAKPYLSRRLKFNAEHFKQDVSELCTTLNADYNEGVMNAVLNTYKENFERGAVLWKATSKEDGVAFRFYERKKVDVVGPAINNSLISGNHGMIPLITSWANFKKNAIASCDFDPAKGLCKTWIWLGGRHPTRDLLVAPNVPGTIRSLERKLISAGLHTVRHAAVDWRSSTVNLYFWVPRPLTLPVVNTLITLPGTPPINEEKLTLMKPFFKPNGFTFATTIDTATGKFKRVSFYALRLDGNNLPIMGDQLATFFKDAPSNDKTEMNIVAWSFAGGSNGSSNYIKGERSYIGDLEQVLDAWGSPI</sequence>
<protein>
    <recommendedName>
        <fullName evidence="4">Aromatic prenyltransferase</fullName>
        <ecNumber evidence="6">2.5.1.-</ecNumber>
    </recommendedName>
</protein>
<organism>
    <name type="scientific">Talaromyces marneffei (strain ATCC 18224 / CBS 334.59 / QM 7333)</name>
    <name type="common">Penicillium marneffei</name>
    <dbReference type="NCBI Taxonomy" id="441960"/>
    <lineage>
        <taxon>Eukaryota</taxon>
        <taxon>Fungi</taxon>
        <taxon>Dikarya</taxon>
        <taxon>Ascomycota</taxon>
        <taxon>Pezizomycotina</taxon>
        <taxon>Eurotiomycetes</taxon>
        <taxon>Eurotiomycetidae</taxon>
        <taxon>Eurotiales</taxon>
        <taxon>Trichocomaceae</taxon>
        <taxon>Talaromyces</taxon>
        <taxon>Talaromyces sect. Talaromyces</taxon>
    </lineage>
</organism>
<gene>
    <name evidence="4" type="primary">ptf</name>
    <name type="ORF">PMAA_022320</name>
</gene>
<comment type="function">
    <text evidence="3">Prenyltransferase that attaches isoprenoid moieties to carbon atoms of aromatic substrates in an enzyme-catalyzed Friedel-Crafts reaction.</text>
</comment>
<comment type="miscellaneous">
    <text evidence="3">The gene is not located within a recognizable secondary metabolic gene cluster.</text>
</comment>
<comment type="similarity">
    <text evidence="5">Belongs to the aromatic prenyltransferase family.</text>
</comment>
<accession>B6Q506</accession>
<evidence type="ECO:0000255" key="1"/>
<evidence type="ECO:0000255" key="2">
    <source>
        <dbReference type="PROSITE-ProRule" id="PRU00498"/>
    </source>
</evidence>
<evidence type="ECO:0000269" key="3">
    <source>
    </source>
</evidence>
<evidence type="ECO:0000303" key="4">
    <source>
    </source>
</evidence>
<evidence type="ECO:0000305" key="5"/>
<evidence type="ECO:0000305" key="6">
    <source>
    </source>
</evidence>
<keyword id="KW-0325">Glycoprotein</keyword>
<keyword id="KW-0637">Prenyltransferase</keyword>
<keyword id="KW-1185">Reference proteome</keyword>
<keyword id="KW-0732">Signal</keyword>
<keyword id="KW-0808">Transferase</keyword>
<name>PTF_TALMQ</name>